<evidence type="ECO:0000250" key="1"/>
<evidence type="ECO:0000255" key="2">
    <source>
        <dbReference type="PROSITE-ProRule" id="PRU10013"/>
    </source>
</evidence>
<evidence type="ECO:0000305" key="3"/>
<proteinExistence type="evidence at transcript level"/>
<comment type="function">
    <text>Occurs in almost all aerobically respiring organisms and serves to protect cells from the toxic effects of hydrogen peroxide.</text>
</comment>
<comment type="catalytic activity">
    <reaction evidence="2">
        <text>2 H2O2 = O2 + 2 H2O</text>
        <dbReference type="Rhea" id="RHEA:20309"/>
        <dbReference type="ChEBI" id="CHEBI:15377"/>
        <dbReference type="ChEBI" id="CHEBI:15379"/>
        <dbReference type="ChEBI" id="CHEBI:16240"/>
        <dbReference type="EC" id="1.11.1.6"/>
    </reaction>
</comment>
<comment type="cofactor">
    <cofactor>
        <name>heme</name>
        <dbReference type="ChEBI" id="CHEBI:30413"/>
    </cofactor>
</comment>
<comment type="subunit">
    <text evidence="1">Homotetramer.</text>
</comment>
<comment type="subcellular location">
    <subcellularLocation>
        <location evidence="1">Peroxisome</location>
    </subcellularLocation>
    <subcellularLocation>
        <location evidence="1">Glyoxysome</location>
    </subcellularLocation>
</comment>
<comment type="similarity">
    <text evidence="3">Belongs to the catalase family.</text>
</comment>
<organism>
    <name type="scientific">Solanum tuberosum</name>
    <name type="common">Potato</name>
    <dbReference type="NCBI Taxonomy" id="4113"/>
    <lineage>
        <taxon>Eukaryota</taxon>
        <taxon>Viridiplantae</taxon>
        <taxon>Streptophyta</taxon>
        <taxon>Embryophyta</taxon>
        <taxon>Tracheophyta</taxon>
        <taxon>Spermatophyta</taxon>
        <taxon>Magnoliopsida</taxon>
        <taxon>eudicotyledons</taxon>
        <taxon>Gunneridae</taxon>
        <taxon>Pentapetalae</taxon>
        <taxon>asterids</taxon>
        <taxon>lamiids</taxon>
        <taxon>Solanales</taxon>
        <taxon>Solanaceae</taxon>
        <taxon>Solanoideae</taxon>
        <taxon>Solaneae</taxon>
        <taxon>Solanum</taxon>
    </lineage>
</organism>
<sequence>MDPSKYRPSSAYDTPFLTTNAGGPVYNNVSSLTVGPRGPVLLEDYYLIEKLATFDREKIPERVVHARGASAKGFFEVTHDISHLTCADFLRAPGAQTPVICRFSTVVHERGSPESIRDIRGFGVKFYNRGGNFDLVGNNVPVFFNRDAKSFPDTIRALKPNPKSHIQEDWRTLDFFSFLPESLHTFAFFYDDVCLPTDYRHMEGFGVHAYQLINKEGKAHYVKFHWKPTCGVKCMSEEEAIRVGGTNHSHATKDLYDSIAAGNYPEWKLFIQTMDPEDVDKFDFDPLDVTKTWPEDLLPLIPVGRLVLNRNIDNFFAENEQLAFNPGHIVPGIYYSEDKLLQTRIFAYADTQRHRIGPNYMQLPVNAPKCGHHNNHRDGAMNMTHRDEEVDYFPSRFDPCRPAEQYPIPACVLNGRRTNCVIPKENNSKQAGERYRSWESDRQDRYINKWVESLSDPRVTHEIRSIWISYLSQADKSCGQKVASRLTVKPTM</sequence>
<accession>P49284</accession>
<reference key="1">
    <citation type="online journal article" date="1995" name="Plant Gene Register">
        <title>Isolation and characterization of a potato catalase cDNA.</title>
        <authorList>
            <person name="Wu G."/>
            <person name="Shah D.M."/>
        </authorList>
        <locator>PGR95-037</locator>
    </citation>
    <scope>NUCLEOTIDE SEQUENCE [MRNA]</scope>
    <source>
        <strain>cv. Russet Burbank-0</strain>
        <tissue>Root</tissue>
    </source>
</reference>
<protein>
    <recommendedName>
        <fullName>Catalase isozyme 1</fullName>
        <ecNumber>1.11.1.6</ecNumber>
    </recommendedName>
</protein>
<feature type="chain" id="PRO_0000084961" description="Catalase isozyme 1">
    <location>
        <begin position="1"/>
        <end position="492"/>
    </location>
</feature>
<feature type="active site" evidence="2">
    <location>
        <position position="65"/>
    </location>
</feature>
<feature type="active site" evidence="2">
    <location>
        <position position="138"/>
    </location>
</feature>
<feature type="binding site" description="axial binding residue" evidence="1">
    <location>
        <position position="348"/>
    </location>
    <ligand>
        <name>heme</name>
        <dbReference type="ChEBI" id="CHEBI:30413"/>
    </ligand>
    <ligandPart>
        <name>Fe</name>
        <dbReference type="ChEBI" id="CHEBI:18248"/>
    </ligandPart>
</feature>
<keyword id="KW-0330">Glyoxysome</keyword>
<keyword id="KW-0349">Heme</keyword>
<keyword id="KW-0376">Hydrogen peroxide</keyword>
<keyword id="KW-0408">Iron</keyword>
<keyword id="KW-0479">Metal-binding</keyword>
<keyword id="KW-0560">Oxidoreductase</keyword>
<keyword id="KW-0575">Peroxidase</keyword>
<keyword id="KW-0576">Peroxisome</keyword>
<keyword id="KW-1185">Reference proteome</keyword>
<name>CATA1_SOLTU</name>
<dbReference type="EC" id="1.11.1.6"/>
<dbReference type="EMBL" id="U27082">
    <property type="protein sequence ID" value="AAA80650.1"/>
    <property type="molecule type" value="mRNA"/>
</dbReference>
<dbReference type="SMR" id="P49284"/>
<dbReference type="STRING" id="4113.P49284"/>
<dbReference type="ProMEX" id="P49284"/>
<dbReference type="InParanoid" id="P49284"/>
<dbReference type="Proteomes" id="UP000011115">
    <property type="component" value="Unassembled WGS sequence"/>
</dbReference>
<dbReference type="ExpressionAtlas" id="P49284">
    <property type="expression patterns" value="baseline"/>
</dbReference>
<dbReference type="GO" id="GO:0005737">
    <property type="term" value="C:cytoplasm"/>
    <property type="evidence" value="ECO:0000318"/>
    <property type="project" value="GO_Central"/>
</dbReference>
<dbReference type="GO" id="GO:0009514">
    <property type="term" value="C:glyoxysome"/>
    <property type="evidence" value="ECO:0007669"/>
    <property type="project" value="UniProtKB-SubCell"/>
</dbReference>
<dbReference type="GO" id="GO:0005777">
    <property type="term" value="C:peroxisome"/>
    <property type="evidence" value="ECO:0000318"/>
    <property type="project" value="GO_Central"/>
</dbReference>
<dbReference type="GO" id="GO:0005886">
    <property type="term" value="C:plasma membrane"/>
    <property type="evidence" value="ECO:0000318"/>
    <property type="project" value="GO_Central"/>
</dbReference>
<dbReference type="GO" id="GO:0004096">
    <property type="term" value="F:catalase activity"/>
    <property type="evidence" value="ECO:0000318"/>
    <property type="project" value="GO_Central"/>
</dbReference>
<dbReference type="GO" id="GO:0020037">
    <property type="term" value="F:heme binding"/>
    <property type="evidence" value="ECO:0000318"/>
    <property type="project" value="GO_Central"/>
</dbReference>
<dbReference type="GO" id="GO:0046872">
    <property type="term" value="F:metal ion binding"/>
    <property type="evidence" value="ECO:0007669"/>
    <property type="project" value="UniProtKB-KW"/>
</dbReference>
<dbReference type="GO" id="GO:0042744">
    <property type="term" value="P:hydrogen peroxide catabolic process"/>
    <property type="evidence" value="ECO:0000318"/>
    <property type="project" value="GO_Central"/>
</dbReference>
<dbReference type="GO" id="GO:0042542">
    <property type="term" value="P:response to hydrogen peroxide"/>
    <property type="evidence" value="ECO:0000318"/>
    <property type="project" value="GO_Central"/>
</dbReference>
<dbReference type="CDD" id="cd08154">
    <property type="entry name" value="catalase_clade_1"/>
    <property type="match status" value="1"/>
</dbReference>
<dbReference type="FunFam" id="2.40.180.10:FF:000002">
    <property type="entry name" value="Catalase"/>
    <property type="match status" value="1"/>
</dbReference>
<dbReference type="Gene3D" id="2.40.180.10">
    <property type="entry name" value="Catalase core domain"/>
    <property type="match status" value="1"/>
</dbReference>
<dbReference type="InterPro" id="IPR018028">
    <property type="entry name" value="Catalase"/>
</dbReference>
<dbReference type="InterPro" id="IPR024708">
    <property type="entry name" value="Catalase_AS"/>
</dbReference>
<dbReference type="InterPro" id="IPR024711">
    <property type="entry name" value="Catalase_clade1/3"/>
</dbReference>
<dbReference type="InterPro" id="IPR011614">
    <property type="entry name" value="Catalase_core"/>
</dbReference>
<dbReference type="InterPro" id="IPR002226">
    <property type="entry name" value="Catalase_haem_BS"/>
</dbReference>
<dbReference type="InterPro" id="IPR010582">
    <property type="entry name" value="Catalase_immune_responsive"/>
</dbReference>
<dbReference type="InterPro" id="IPR020835">
    <property type="entry name" value="Catalase_sf"/>
</dbReference>
<dbReference type="PANTHER" id="PTHR11465">
    <property type="entry name" value="CATALASE"/>
    <property type="match status" value="1"/>
</dbReference>
<dbReference type="PANTHER" id="PTHR11465:SF64">
    <property type="entry name" value="CATALASE ISOZYME 1"/>
    <property type="match status" value="1"/>
</dbReference>
<dbReference type="Pfam" id="PF00199">
    <property type="entry name" value="Catalase"/>
    <property type="match status" value="1"/>
</dbReference>
<dbReference type="Pfam" id="PF06628">
    <property type="entry name" value="Catalase-rel"/>
    <property type="match status" value="1"/>
</dbReference>
<dbReference type="PIRSF" id="PIRSF038928">
    <property type="entry name" value="Catalase_clade1-3"/>
    <property type="match status" value="1"/>
</dbReference>
<dbReference type="PRINTS" id="PR00067">
    <property type="entry name" value="CATALASE"/>
</dbReference>
<dbReference type="SMART" id="SM01060">
    <property type="entry name" value="Catalase"/>
    <property type="match status" value="1"/>
</dbReference>
<dbReference type="SUPFAM" id="SSF56634">
    <property type="entry name" value="Heme-dependent catalase-like"/>
    <property type="match status" value="1"/>
</dbReference>
<dbReference type="PROSITE" id="PS00437">
    <property type="entry name" value="CATALASE_1"/>
    <property type="match status" value="1"/>
</dbReference>
<dbReference type="PROSITE" id="PS00438">
    <property type="entry name" value="CATALASE_2"/>
    <property type="match status" value="1"/>
</dbReference>
<dbReference type="PROSITE" id="PS51402">
    <property type="entry name" value="CATALASE_3"/>
    <property type="match status" value="1"/>
</dbReference>
<gene>
    <name type="primary">CAT1</name>
</gene>